<proteinExistence type="inferred from homology"/>
<organism>
    <name type="scientific">Pseudomonas putida (strain ATCC 47054 / DSM 6125 / CFBP 8728 / NCIMB 11950 / KT2440)</name>
    <dbReference type="NCBI Taxonomy" id="160488"/>
    <lineage>
        <taxon>Bacteria</taxon>
        <taxon>Pseudomonadati</taxon>
        <taxon>Pseudomonadota</taxon>
        <taxon>Gammaproteobacteria</taxon>
        <taxon>Pseudomonadales</taxon>
        <taxon>Pseudomonadaceae</taxon>
        <taxon>Pseudomonas</taxon>
    </lineage>
</organism>
<gene>
    <name type="primary">algC</name>
    <name type="ordered locus">PP_5288</name>
</gene>
<sequence>MAHLVPAALPDSIFRAYDIRGVVGKTLHAETAYWIGRAIGAQSLAQGEPQVSVGRDGRLSGPMLVEQLIKGLVDAGCNVSDVGLVPTPALYYAANVLAGKSGVMLTGSHNPSDYNGFKIVIAGDTLANEQIQALLTRLKTNDLTLAQGRVEKVEILDRYFKQIVGDVKLAKKLKVVVDCGNGAAGVVAPQLIEALGCEVIPLFCEVDGNFPNHHPDPGKPENLEDLIAKVKETGADIGLAFDGDGDRVGVVTNTGSIVYPDRLLMLFAQDVLSRNPGAEIIFDVKCTRRLTPLIEQHGGRALMWKTGHSLIKKKMKQTGSLLAGEMSGHIFIKERWYGFDDGIYSAARLLEILSKTEQSAENLFAAFPNDISTPEINIDVTDEGKFSIIDALQRDADWGEANLTTIDGVRVDYANGWGLVRASNTTPVLVLRFEADSDAELQRIKDVFRTQLLRVEPELQLPF</sequence>
<name>ALGC_PSEPK</name>
<reference key="1">
    <citation type="journal article" date="2002" name="Environ. Microbiol.">
        <title>Complete genome sequence and comparative analysis of the metabolically versatile Pseudomonas putida KT2440.</title>
        <authorList>
            <person name="Nelson K.E."/>
            <person name="Weinel C."/>
            <person name="Paulsen I.T."/>
            <person name="Dodson R.J."/>
            <person name="Hilbert H."/>
            <person name="Martins dos Santos V.A.P."/>
            <person name="Fouts D.E."/>
            <person name="Gill S.R."/>
            <person name="Pop M."/>
            <person name="Holmes M."/>
            <person name="Brinkac L.M."/>
            <person name="Beanan M.J."/>
            <person name="DeBoy R.T."/>
            <person name="Daugherty S.C."/>
            <person name="Kolonay J.F."/>
            <person name="Madupu R."/>
            <person name="Nelson W.C."/>
            <person name="White O."/>
            <person name="Peterson J.D."/>
            <person name="Khouri H.M."/>
            <person name="Hance I."/>
            <person name="Chris Lee P."/>
            <person name="Holtzapple E.K."/>
            <person name="Scanlan D."/>
            <person name="Tran K."/>
            <person name="Moazzez A."/>
            <person name="Utterback T.R."/>
            <person name="Rizzo M."/>
            <person name="Lee K."/>
            <person name="Kosack D."/>
            <person name="Moestl D."/>
            <person name="Wedler H."/>
            <person name="Lauber J."/>
            <person name="Stjepandic D."/>
            <person name="Hoheisel J."/>
            <person name="Straetz M."/>
            <person name="Heim S."/>
            <person name="Kiewitz C."/>
            <person name="Eisen J.A."/>
            <person name="Timmis K.N."/>
            <person name="Duesterhoeft A."/>
            <person name="Tuemmler B."/>
            <person name="Fraser C.M."/>
        </authorList>
    </citation>
    <scope>NUCLEOTIDE SEQUENCE [LARGE SCALE GENOMIC DNA]</scope>
    <source>
        <strain>ATCC 47054 / DSM 6125 / CFBP 8728 / NCIMB 11950 / KT2440</strain>
    </source>
</reference>
<keyword id="KW-0016">Alginate biosynthesis</keyword>
<keyword id="KW-0413">Isomerase</keyword>
<keyword id="KW-0448">Lipopolysaccharide biosynthesis</keyword>
<keyword id="KW-0460">Magnesium</keyword>
<keyword id="KW-0479">Metal-binding</keyword>
<keyword id="KW-0511">Multifunctional enzyme</keyword>
<keyword id="KW-0597">Phosphoprotein</keyword>
<keyword id="KW-1185">Reference proteome</keyword>
<accession>Q88C93</accession>
<dbReference type="EC" id="5.4.2.2"/>
<dbReference type="EC" id="5.4.2.8"/>
<dbReference type="EMBL" id="AE015451">
    <property type="protein sequence ID" value="AAN70853.1"/>
    <property type="molecule type" value="Genomic_DNA"/>
</dbReference>
<dbReference type="RefSeq" id="NP_747389.1">
    <property type="nucleotide sequence ID" value="NC_002947.4"/>
</dbReference>
<dbReference type="SMR" id="Q88C93"/>
<dbReference type="STRING" id="160488.PP_5288"/>
<dbReference type="PaxDb" id="160488-PP_5288"/>
<dbReference type="KEGG" id="ppu:PP_5288"/>
<dbReference type="PATRIC" id="fig|160488.4.peg.5640"/>
<dbReference type="eggNOG" id="COG1109">
    <property type="taxonomic scope" value="Bacteria"/>
</dbReference>
<dbReference type="HOGENOM" id="CLU_016950_9_1_6"/>
<dbReference type="OrthoDB" id="9803322at2"/>
<dbReference type="PhylomeDB" id="Q88C93"/>
<dbReference type="BioCyc" id="PPUT160488:G1G01-5645-MONOMER"/>
<dbReference type="UniPathway" id="UPA00030"/>
<dbReference type="UniPathway" id="UPA00126">
    <property type="reaction ID" value="UER00424"/>
</dbReference>
<dbReference type="Proteomes" id="UP000000556">
    <property type="component" value="Chromosome"/>
</dbReference>
<dbReference type="GO" id="GO:0000287">
    <property type="term" value="F:magnesium ion binding"/>
    <property type="evidence" value="ECO:0007669"/>
    <property type="project" value="InterPro"/>
</dbReference>
<dbReference type="GO" id="GO:0004614">
    <property type="term" value="F:phosphoglucomutase activity"/>
    <property type="evidence" value="ECO:0007669"/>
    <property type="project" value="UniProtKB-EC"/>
</dbReference>
<dbReference type="GO" id="GO:0004615">
    <property type="term" value="F:phosphomannomutase activity"/>
    <property type="evidence" value="ECO:0007669"/>
    <property type="project" value="UniProtKB-EC"/>
</dbReference>
<dbReference type="GO" id="GO:0042121">
    <property type="term" value="P:alginic acid biosynthetic process"/>
    <property type="evidence" value="ECO:0007669"/>
    <property type="project" value="UniProtKB-KW"/>
</dbReference>
<dbReference type="GO" id="GO:0009298">
    <property type="term" value="P:GDP-mannose biosynthetic process"/>
    <property type="evidence" value="ECO:0007669"/>
    <property type="project" value="UniProtKB-UniPathway"/>
</dbReference>
<dbReference type="GO" id="GO:0009103">
    <property type="term" value="P:lipopolysaccharide biosynthetic process"/>
    <property type="evidence" value="ECO:0007669"/>
    <property type="project" value="UniProtKB-UniPathway"/>
</dbReference>
<dbReference type="CDD" id="cd03089">
    <property type="entry name" value="PMM_PGM"/>
    <property type="match status" value="1"/>
</dbReference>
<dbReference type="FunFam" id="3.40.120.10:FF:000001">
    <property type="entry name" value="Phosphoglucosamine mutase"/>
    <property type="match status" value="1"/>
</dbReference>
<dbReference type="FunFam" id="3.40.120.10:FF:000025">
    <property type="entry name" value="Phosphomannomutase"/>
    <property type="match status" value="1"/>
</dbReference>
<dbReference type="FunFam" id="3.30.310.50:FF:000007">
    <property type="entry name" value="Phosphomannomutase/phosphoglucomutase"/>
    <property type="match status" value="1"/>
</dbReference>
<dbReference type="FunFam" id="3.40.120.10:FF:000021">
    <property type="entry name" value="Phosphomannomutase/phosphoglucomutase"/>
    <property type="match status" value="1"/>
</dbReference>
<dbReference type="Gene3D" id="3.40.120.10">
    <property type="entry name" value="Alpha-D-Glucose-1,6-Bisphosphate, subunit A, domain 3"/>
    <property type="match status" value="3"/>
</dbReference>
<dbReference type="Gene3D" id="3.30.310.50">
    <property type="entry name" value="Alpha-D-phosphohexomutase, C-terminal domain"/>
    <property type="match status" value="1"/>
</dbReference>
<dbReference type="InterPro" id="IPR005844">
    <property type="entry name" value="A-D-PHexomutase_a/b/a-I"/>
</dbReference>
<dbReference type="InterPro" id="IPR016055">
    <property type="entry name" value="A-D-PHexomutase_a/b/a-I/II/III"/>
</dbReference>
<dbReference type="InterPro" id="IPR005845">
    <property type="entry name" value="A-D-PHexomutase_a/b/a-II"/>
</dbReference>
<dbReference type="InterPro" id="IPR005846">
    <property type="entry name" value="A-D-PHexomutase_a/b/a-III"/>
</dbReference>
<dbReference type="InterPro" id="IPR005843">
    <property type="entry name" value="A-D-PHexomutase_C"/>
</dbReference>
<dbReference type="InterPro" id="IPR036900">
    <property type="entry name" value="A-D-PHexomutase_C_sf"/>
</dbReference>
<dbReference type="InterPro" id="IPR016066">
    <property type="entry name" value="A-D-PHexomutase_CS"/>
</dbReference>
<dbReference type="InterPro" id="IPR005841">
    <property type="entry name" value="Alpha-D-phosphohexomutase_SF"/>
</dbReference>
<dbReference type="PANTHER" id="PTHR43771">
    <property type="entry name" value="PHOSPHOMANNOMUTASE"/>
    <property type="match status" value="1"/>
</dbReference>
<dbReference type="PANTHER" id="PTHR43771:SF2">
    <property type="entry name" value="PHOSPHOMANNOMUTASE_PHOSPHOGLUCOMUTASE"/>
    <property type="match status" value="1"/>
</dbReference>
<dbReference type="Pfam" id="PF02878">
    <property type="entry name" value="PGM_PMM_I"/>
    <property type="match status" value="1"/>
</dbReference>
<dbReference type="Pfam" id="PF02879">
    <property type="entry name" value="PGM_PMM_II"/>
    <property type="match status" value="1"/>
</dbReference>
<dbReference type="Pfam" id="PF02880">
    <property type="entry name" value="PGM_PMM_III"/>
    <property type="match status" value="1"/>
</dbReference>
<dbReference type="Pfam" id="PF00408">
    <property type="entry name" value="PGM_PMM_IV"/>
    <property type="match status" value="1"/>
</dbReference>
<dbReference type="PRINTS" id="PR00509">
    <property type="entry name" value="PGMPMM"/>
</dbReference>
<dbReference type="SUPFAM" id="SSF55957">
    <property type="entry name" value="Phosphoglucomutase, C-terminal domain"/>
    <property type="match status" value="1"/>
</dbReference>
<dbReference type="SUPFAM" id="SSF53738">
    <property type="entry name" value="Phosphoglucomutase, first 3 domains"/>
    <property type="match status" value="3"/>
</dbReference>
<dbReference type="PROSITE" id="PS00710">
    <property type="entry name" value="PGM_PMM"/>
    <property type="match status" value="1"/>
</dbReference>
<evidence type="ECO:0000250" key="1"/>
<evidence type="ECO:0000305" key="2"/>
<feature type="chain" id="PRO_0000147815" description="Phosphomannomutase/phosphoglucomutase">
    <location>
        <begin position="1"/>
        <end position="463"/>
    </location>
</feature>
<feature type="active site" description="Phosphoserine intermediate" evidence="1">
    <location>
        <position position="108"/>
    </location>
</feature>
<feature type="binding site" description="via phosphate group" evidence="1">
    <location>
        <position position="108"/>
    </location>
    <ligand>
        <name>Mg(2+)</name>
        <dbReference type="ChEBI" id="CHEBI:18420"/>
    </ligand>
</feature>
<feature type="binding site" evidence="1">
    <location>
        <position position="242"/>
    </location>
    <ligand>
        <name>Mg(2+)</name>
        <dbReference type="ChEBI" id="CHEBI:18420"/>
    </ligand>
</feature>
<feature type="binding site" evidence="1">
    <location>
        <position position="244"/>
    </location>
    <ligand>
        <name>Mg(2+)</name>
        <dbReference type="ChEBI" id="CHEBI:18420"/>
    </ligand>
</feature>
<feature type="binding site" evidence="1">
    <location>
        <position position="246"/>
    </location>
    <ligand>
        <name>Mg(2+)</name>
        <dbReference type="ChEBI" id="CHEBI:18420"/>
    </ligand>
</feature>
<feature type="binding site" evidence="1">
    <location>
        <position position="325"/>
    </location>
    <ligand>
        <name>substrate</name>
    </ligand>
</feature>
<feature type="binding site" evidence="1">
    <location>
        <position position="327"/>
    </location>
    <ligand>
        <name>substrate</name>
    </ligand>
</feature>
<feature type="binding site" evidence="1">
    <location>
        <position position="329"/>
    </location>
    <ligand>
        <name>substrate</name>
    </ligand>
</feature>
<feature type="site" description="Interacts with the biphosphorylated intermediate" evidence="1">
    <location>
        <position position="421"/>
    </location>
</feature>
<protein>
    <recommendedName>
        <fullName>Phosphomannomutase/phosphoglucomutase</fullName>
        <shortName>PMM / PGM</shortName>
        <ecNumber>5.4.2.2</ecNumber>
        <ecNumber>5.4.2.8</ecNumber>
    </recommendedName>
</protein>
<comment type="function">
    <text evidence="1">The phosphomannomutase activity produces a precursor for alginate polymerization. The alginate layer causes a mucoid phenotype and provides a protective barrier against host immune defenses and antibiotics. Also involved in core-LPS biosynthesis due to its phosphoglucomutase activity. Essential for biofilm production (By similarity).</text>
</comment>
<comment type="catalytic activity">
    <reaction>
        <text>alpha-D-mannose 1-phosphate = D-mannose 6-phosphate</text>
        <dbReference type="Rhea" id="RHEA:11140"/>
        <dbReference type="ChEBI" id="CHEBI:58409"/>
        <dbReference type="ChEBI" id="CHEBI:58735"/>
        <dbReference type="EC" id="5.4.2.8"/>
    </reaction>
</comment>
<comment type="catalytic activity">
    <reaction>
        <text>alpha-D-glucose 1-phosphate = alpha-D-glucose 6-phosphate</text>
        <dbReference type="Rhea" id="RHEA:23536"/>
        <dbReference type="ChEBI" id="CHEBI:58225"/>
        <dbReference type="ChEBI" id="CHEBI:58601"/>
        <dbReference type="EC" id="5.4.2.2"/>
    </reaction>
</comment>
<comment type="cofactor">
    <cofactor evidence="1">
        <name>Mg(2+)</name>
        <dbReference type="ChEBI" id="CHEBI:18420"/>
    </cofactor>
    <text evidence="1">Binds 1 Mg(2+) ion per subunit.</text>
</comment>
<comment type="pathway">
    <text>Nucleotide-sugar biosynthesis; GDP-alpha-D-mannose biosynthesis; alpha-D-mannose 1-phosphate from D-fructose 6-phosphate: step 2/2.</text>
</comment>
<comment type="pathway">
    <text>Bacterial outer membrane biogenesis; lipopolysaccharide biosynthesis.</text>
</comment>
<comment type="subunit">
    <text evidence="1">Monomer.</text>
</comment>
<comment type="similarity">
    <text evidence="2">Belongs to the phosphohexose mutase family.</text>
</comment>